<evidence type="ECO:0000255" key="1">
    <source>
        <dbReference type="HAMAP-Rule" id="MF_00154"/>
    </source>
</evidence>
<reference key="1">
    <citation type="journal article" date="2001" name="Nature">
        <title>Complete genome sequence of a multiple drug resistant Salmonella enterica serovar Typhi CT18.</title>
        <authorList>
            <person name="Parkhill J."/>
            <person name="Dougan G."/>
            <person name="James K.D."/>
            <person name="Thomson N.R."/>
            <person name="Pickard D."/>
            <person name="Wain J."/>
            <person name="Churcher C.M."/>
            <person name="Mungall K.L."/>
            <person name="Bentley S.D."/>
            <person name="Holden M.T.G."/>
            <person name="Sebaihia M."/>
            <person name="Baker S."/>
            <person name="Basham D."/>
            <person name="Brooks K."/>
            <person name="Chillingworth T."/>
            <person name="Connerton P."/>
            <person name="Cronin A."/>
            <person name="Davis P."/>
            <person name="Davies R.M."/>
            <person name="Dowd L."/>
            <person name="White N."/>
            <person name="Farrar J."/>
            <person name="Feltwell T."/>
            <person name="Hamlin N."/>
            <person name="Haque A."/>
            <person name="Hien T.T."/>
            <person name="Holroyd S."/>
            <person name="Jagels K."/>
            <person name="Krogh A."/>
            <person name="Larsen T.S."/>
            <person name="Leather S."/>
            <person name="Moule S."/>
            <person name="O'Gaora P."/>
            <person name="Parry C."/>
            <person name="Quail M.A."/>
            <person name="Rutherford K.M."/>
            <person name="Simmonds M."/>
            <person name="Skelton J."/>
            <person name="Stevens K."/>
            <person name="Whitehead S."/>
            <person name="Barrell B.G."/>
        </authorList>
    </citation>
    <scope>NUCLEOTIDE SEQUENCE [LARGE SCALE GENOMIC DNA]</scope>
    <source>
        <strain>CT18</strain>
    </source>
</reference>
<reference key="2">
    <citation type="journal article" date="2003" name="J. Bacteriol.">
        <title>Comparative genomics of Salmonella enterica serovar Typhi strains Ty2 and CT18.</title>
        <authorList>
            <person name="Deng W."/>
            <person name="Liou S.-R."/>
            <person name="Plunkett G. III"/>
            <person name="Mayhew G.F."/>
            <person name="Rose D.J."/>
            <person name="Burland V."/>
            <person name="Kodoyianni V."/>
            <person name="Schwartz D.C."/>
            <person name="Blattner F.R."/>
        </authorList>
    </citation>
    <scope>NUCLEOTIDE SEQUENCE [LARGE SCALE GENOMIC DNA]</scope>
    <source>
        <strain>ATCC 700931 / Ty2</strain>
    </source>
</reference>
<name>CYOE_SALTI</name>
<gene>
    <name evidence="1" type="primary">cyoE</name>
    <name type="ordered locus">STY0481</name>
    <name type="ordered locus">t2421</name>
</gene>
<sequence>MMFKQYLQVTKPGIIFGNLISVIGGFLLASKGSIDYPLFIYTLVGVSLVVASGCVFNNYIDRDIDRKMERTKNRVLVKGLISPGVSLVYATLLGIAGFMLLWFGANPLACWLGVMGFVVYVGVYSLYMKRHSVYGTLIGSLSGAAPPVIGYCAVTGDFDSGAAILLAIFSLWQMPHSYAIAIFRFKDYQAANIPVLPVIKGISVAKNHITLYIIAFAVATLMLTLGGYAGYKYLVVAAAVSVWWLGMALRGYKVEDDKVWARKLFGFSIIAITALSIMMSVDFMVPNSQNLLTYVW</sequence>
<dbReference type="EC" id="2.5.1.141" evidence="1"/>
<dbReference type="EMBL" id="AE014613">
    <property type="protein sequence ID" value="AAO70011.1"/>
    <property type="molecule type" value="Genomic_DNA"/>
</dbReference>
<dbReference type="EMBL" id="AL513382">
    <property type="protein sequence ID" value="CAD08898.1"/>
    <property type="molecule type" value="Genomic_DNA"/>
</dbReference>
<dbReference type="RefSeq" id="NP_455036.1">
    <property type="nucleotide sequence ID" value="NC_003198.1"/>
</dbReference>
<dbReference type="RefSeq" id="WP_000971351.1">
    <property type="nucleotide sequence ID" value="NZ_WSUR01000026.1"/>
</dbReference>
<dbReference type="SMR" id="Q8Z8V5"/>
<dbReference type="STRING" id="220341.gene:17584503"/>
<dbReference type="KEGG" id="stt:t2421"/>
<dbReference type="KEGG" id="sty:STY0481"/>
<dbReference type="PATRIC" id="fig|220341.7.peg.482"/>
<dbReference type="eggNOG" id="COG0109">
    <property type="taxonomic scope" value="Bacteria"/>
</dbReference>
<dbReference type="HOGENOM" id="CLU_029631_0_0_6"/>
<dbReference type="OMA" id="TKPGIIM"/>
<dbReference type="OrthoDB" id="9814417at2"/>
<dbReference type="UniPathway" id="UPA00834">
    <property type="reaction ID" value="UER00712"/>
</dbReference>
<dbReference type="Proteomes" id="UP000000541">
    <property type="component" value="Chromosome"/>
</dbReference>
<dbReference type="Proteomes" id="UP000002670">
    <property type="component" value="Chromosome"/>
</dbReference>
<dbReference type="GO" id="GO:0005886">
    <property type="term" value="C:plasma membrane"/>
    <property type="evidence" value="ECO:0007669"/>
    <property type="project" value="UniProtKB-SubCell"/>
</dbReference>
<dbReference type="GO" id="GO:0008495">
    <property type="term" value="F:protoheme IX farnesyltransferase activity"/>
    <property type="evidence" value="ECO:0007669"/>
    <property type="project" value="UniProtKB-UniRule"/>
</dbReference>
<dbReference type="GO" id="GO:0048034">
    <property type="term" value="P:heme O biosynthetic process"/>
    <property type="evidence" value="ECO:0007669"/>
    <property type="project" value="UniProtKB-UniRule"/>
</dbReference>
<dbReference type="CDD" id="cd13957">
    <property type="entry name" value="PT_UbiA_Cox10"/>
    <property type="match status" value="1"/>
</dbReference>
<dbReference type="FunFam" id="1.10.357.140:FF:000001">
    <property type="entry name" value="Protoheme IX farnesyltransferase"/>
    <property type="match status" value="1"/>
</dbReference>
<dbReference type="Gene3D" id="1.10.357.140">
    <property type="entry name" value="UbiA prenyltransferase"/>
    <property type="match status" value="1"/>
</dbReference>
<dbReference type="HAMAP" id="MF_00154">
    <property type="entry name" value="CyoE_CtaB"/>
    <property type="match status" value="1"/>
</dbReference>
<dbReference type="InterPro" id="IPR006369">
    <property type="entry name" value="Protohaem_IX_farnesylTrfase"/>
</dbReference>
<dbReference type="InterPro" id="IPR000537">
    <property type="entry name" value="UbiA_prenyltransferase"/>
</dbReference>
<dbReference type="InterPro" id="IPR030470">
    <property type="entry name" value="UbiA_prenylTrfase_CS"/>
</dbReference>
<dbReference type="InterPro" id="IPR044878">
    <property type="entry name" value="UbiA_sf"/>
</dbReference>
<dbReference type="NCBIfam" id="TIGR01473">
    <property type="entry name" value="cyoE_ctaB"/>
    <property type="match status" value="1"/>
</dbReference>
<dbReference type="NCBIfam" id="NF003348">
    <property type="entry name" value="PRK04375.1-1"/>
    <property type="match status" value="1"/>
</dbReference>
<dbReference type="PANTHER" id="PTHR43448">
    <property type="entry name" value="PROTOHEME IX FARNESYLTRANSFERASE, MITOCHONDRIAL"/>
    <property type="match status" value="1"/>
</dbReference>
<dbReference type="PANTHER" id="PTHR43448:SF2">
    <property type="entry name" value="PROTOHEME IX FARNESYLTRANSFERASE, MITOCHONDRIAL"/>
    <property type="match status" value="1"/>
</dbReference>
<dbReference type="Pfam" id="PF01040">
    <property type="entry name" value="UbiA"/>
    <property type="match status" value="1"/>
</dbReference>
<dbReference type="SUPFAM" id="SSF82866">
    <property type="entry name" value="Multidrug efflux transporter AcrB transmembrane domain"/>
    <property type="match status" value="1"/>
</dbReference>
<dbReference type="PROSITE" id="PS00943">
    <property type="entry name" value="UBIA"/>
    <property type="match status" value="1"/>
</dbReference>
<protein>
    <recommendedName>
        <fullName evidence="1">Protoheme IX farnesyltransferase</fullName>
        <ecNumber evidence="1">2.5.1.141</ecNumber>
    </recommendedName>
    <alternativeName>
        <fullName evidence="1">Heme B farnesyltransferase</fullName>
    </alternativeName>
    <alternativeName>
        <fullName evidence="1">Heme O synthase</fullName>
    </alternativeName>
</protein>
<accession>Q8Z8V5</accession>
<accession>Q7C890</accession>
<comment type="function">
    <text evidence="1">Converts heme B (protoheme IX) to heme O by substitution of the vinyl group on carbon 2 of heme B porphyrin ring with a hydroxyethyl farnesyl side group.</text>
</comment>
<comment type="catalytic activity">
    <reaction evidence="1">
        <text>heme b + (2E,6E)-farnesyl diphosphate + H2O = Fe(II)-heme o + diphosphate</text>
        <dbReference type="Rhea" id="RHEA:28070"/>
        <dbReference type="ChEBI" id="CHEBI:15377"/>
        <dbReference type="ChEBI" id="CHEBI:33019"/>
        <dbReference type="ChEBI" id="CHEBI:60344"/>
        <dbReference type="ChEBI" id="CHEBI:60530"/>
        <dbReference type="ChEBI" id="CHEBI:175763"/>
        <dbReference type="EC" id="2.5.1.141"/>
    </reaction>
</comment>
<comment type="pathway">
    <text evidence="1">Porphyrin-containing compound metabolism; heme O biosynthesis; heme O from protoheme: step 1/1.</text>
</comment>
<comment type="subcellular location">
    <subcellularLocation>
        <location evidence="1">Cell inner membrane</location>
        <topology evidence="1">Multi-pass membrane protein</topology>
    </subcellularLocation>
</comment>
<comment type="miscellaneous">
    <text evidence="1">Carbon 2 of the heme B porphyrin ring is defined according to the Fischer nomenclature.</text>
</comment>
<comment type="similarity">
    <text evidence="1">Belongs to the UbiA prenyltransferase family. Protoheme IX farnesyltransferase subfamily.</text>
</comment>
<feature type="chain" id="PRO_0000326938" description="Protoheme IX farnesyltransferase">
    <location>
        <begin position="1"/>
        <end position="296"/>
    </location>
</feature>
<feature type="topological domain" description="Cytoplasmic" evidence="1">
    <location>
        <begin position="1"/>
        <end position="9"/>
    </location>
</feature>
<feature type="transmembrane region" description="Helical" evidence="1">
    <location>
        <begin position="10"/>
        <end position="28"/>
    </location>
</feature>
<feature type="topological domain" description="Periplasmic" evidence="1">
    <location>
        <begin position="29"/>
        <end position="37"/>
    </location>
</feature>
<feature type="transmembrane region" description="Helical" evidence="1">
    <location>
        <begin position="38"/>
        <end position="56"/>
    </location>
</feature>
<feature type="topological domain" description="Cytoplasmic" evidence="1">
    <location>
        <begin position="57"/>
        <end position="78"/>
    </location>
</feature>
<feature type="transmembrane region" description="Helical" evidence="1">
    <location>
        <begin position="79"/>
        <end position="97"/>
    </location>
</feature>
<feature type="topological domain" description="Periplasmic" evidence="1">
    <location>
        <begin position="98"/>
        <end position="107"/>
    </location>
</feature>
<feature type="transmembrane region" description="Helical" evidence="1">
    <location>
        <begin position="108"/>
        <end position="126"/>
    </location>
</feature>
<feature type="topological domain" description="Cytoplasmic" evidence="1">
    <location>
        <begin position="127"/>
        <end position="197"/>
    </location>
</feature>
<feature type="transmembrane region" description="Helical" evidence="1">
    <location>
        <begin position="198"/>
        <end position="216"/>
    </location>
</feature>
<feature type="topological domain" description="Periplasmic" evidence="1">
    <location>
        <begin position="217"/>
        <end position="228"/>
    </location>
</feature>
<feature type="transmembrane region" description="Helical" evidence="1">
    <location>
        <begin position="229"/>
        <end position="247"/>
    </location>
</feature>
<feature type="topological domain" description="Cytoplasmic" evidence="1">
    <location>
        <begin position="248"/>
        <end position="268"/>
    </location>
</feature>
<feature type="transmembrane region" description="Helical" evidence="1">
    <location>
        <begin position="269"/>
        <end position="287"/>
    </location>
</feature>
<feature type="topological domain" description="Periplasmic" evidence="1">
    <location>
        <begin position="288"/>
        <end position="296"/>
    </location>
</feature>
<proteinExistence type="inferred from homology"/>
<organism>
    <name type="scientific">Salmonella typhi</name>
    <dbReference type="NCBI Taxonomy" id="90370"/>
    <lineage>
        <taxon>Bacteria</taxon>
        <taxon>Pseudomonadati</taxon>
        <taxon>Pseudomonadota</taxon>
        <taxon>Gammaproteobacteria</taxon>
        <taxon>Enterobacterales</taxon>
        <taxon>Enterobacteriaceae</taxon>
        <taxon>Salmonella</taxon>
    </lineage>
</organism>
<keyword id="KW-0997">Cell inner membrane</keyword>
<keyword id="KW-1003">Cell membrane</keyword>
<keyword id="KW-0350">Heme biosynthesis</keyword>
<keyword id="KW-0472">Membrane</keyword>
<keyword id="KW-0808">Transferase</keyword>
<keyword id="KW-0812">Transmembrane</keyword>
<keyword id="KW-1133">Transmembrane helix</keyword>